<gene>
    <name type="primary">holD</name>
    <name type="ordered locus">HI_0011</name>
</gene>
<reference key="1">
    <citation type="journal article" date="1995" name="Science">
        <title>Whole-genome random sequencing and assembly of Haemophilus influenzae Rd.</title>
        <authorList>
            <person name="Fleischmann R.D."/>
            <person name="Adams M.D."/>
            <person name="White O."/>
            <person name="Clayton R.A."/>
            <person name="Kirkness E.F."/>
            <person name="Kerlavage A.R."/>
            <person name="Bult C.J."/>
            <person name="Tomb J.-F."/>
            <person name="Dougherty B.A."/>
            <person name="Merrick J.M."/>
            <person name="McKenney K."/>
            <person name="Sutton G.G."/>
            <person name="FitzHugh W."/>
            <person name="Fields C.A."/>
            <person name="Gocayne J.D."/>
            <person name="Scott J.D."/>
            <person name="Shirley R."/>
            <person name="Liu L.-I."/>
            <person name="Glodek A."/>
            <person name="Kelley J.M."/>
            <person name="Weidman J.F."/>
            <person name="Phillips C.A."/>
            <person name="Spriggs T."/>
            <person name="Hedblom E."/>
            <person name="Cotton M.D."/>
            <person name="Utterback T.R."/>
            <person name="Hanna M.C."/>
            <person name="Nguyen D.T."/>
            <person name="Saudek D.M."/>
            <person name="Brandon R.C."/>
            <person name="Fine L.D."/>
            <person name="Fritchman J.L."/>
            <person name="Fuhrmann J.L."/>
            <person name="Geoghagen N.S.M."/>
            <person name="Gnehm C.L."/>
            <person name="McDonald L.A."/>
            <person name="Small K.V."/>
            <person name="Fraser C.M."/>
            <person name="Smith H.O."/>
            <person name="Venter J.C."/>
        </authorList>
    </citation>
    <scope>NUCLEOTIDE SEQUENCE [LARGE SCALE GENOMIC DNA]</scope>
    <source>
        <strain>ATCC 51907 / DSM 11121 / KW20 / Rd</strain>
    </source>
</reference>
<keyword id="KW-0235">DNA replication</keyword>
<keyword id="KW-0239">DNA-directed DNA polymerase</keyword>
<keyword id="KW-0548">Nucleotidyltransferase</keyword>
<keyword id="KW-1185">Reference proteome</keyword>
<keyword id="KW-0808">Transferase</keyword>
<organism>
    <name type="scientific">Haemophilus influenzae (strain ATCC 51907 / DSM 11121 / KW20 / Rd)</name>
    <dbReference type="NCBI Taxonomy" id="71421"/>
    <lineage>
        <taxon>Bacteria</taxon>
        <taxon>Pseudomonadati</taxon>
        <taxon>Pseudomonadota</taxon>
        <taxon>Gammaproteobacteria</taxon>
        <taxon>Pasteurellales</taxon>
        <taxon>Pasteurellaceae</taxon>
        <taxon>Haemophilus</taxon>
    </lineage>
</organism>
<evidence type="ECO:0000250" key="1">
    <source>
        <dbReference type="UniProtKB" id="P28632"/>
    </source>
</evidence>
<evidence type="ECO:0000305" key="2"/>
<comment type="function">
    <text evidence="1">Part of the beta sliding clamp loading complex, which hydrolyzes ATP to load the beta clamp onto primed DNA to form the DNA replication pre-initiation complex. DNA polymerase III is a complex, multichain enzyme responsible for most of the replicative synthesis in bacteria. This DNA polymerase also exhibits 3' to 5' exonuclease activity (By similarity).</text>
</comment>
<comment type="catalytic activity">
    <reaction>
        <text>DNA(n) + a 2'-deoxyribonucleoside 5'-triphosphate = DNA(n+1) + diphosphate</text>
        <dbReference type="Rhea" id="RHEA:22508"/>
        <dbReference type="Rhea" id="RHEA-COMP:17339"/>
        <dbReference type="Rhea" id="RHEA-COMP:17340"/>
        <dbReference type="ChEBI" id="CHEBI:33019"/>
        <dbReference type="ChEBI" id="CHEBI:61560"/>
        <dbReference type="ChEBI" id="CHEBI:173112"/>
        <dbReference type="EC" id="2.7.7.7"/>
    </reaction>
</comment>
<comment type="subunit">
    <text evidence="1">DNA polymerase III contains a core (composed of alpha, epsilon and theta chains) that associates with a tau subunit. This core dimerizes to form the POLIII' complex. PolIII' associates with the gamma complex (composed of gamma, delta, delta', psi and chi chains) and with the beta chain to form the complete DNA polymerase III complex. Interacts directly with the chi subunit (holC) (By similarity).</text>
</comment>
<comment type="similarity">
    <text evidence="2">Belongs to the DNA polymerase III psi/HolD chain family.</text>
</comment>
<accession>P43750</accession>
<sequence length="134" mass="15718">MNRRDLLLQEMGISQWELYRPEVLQGSVGISVAENIRLITVSDENISSSPLLADVLLSLNLKKENCLCLNYDQIQHMECKQPIRYWLLSENSDQIDRTLPFCKQAEQVYRSPSWQQFQSNHQAKRALWQQIQQP</sequence>
<dbReference type="EC" id="2.7.7.7"/>
<dbReference type="EMBL" id="L42023">
    <property type="protein sequence ID" value="AAC21689.1"/>
    <property type="molecule type" value="Genomic_DNA"/>
</dbReference>
<dbReference type="PIR" id="E64042">
    <property type="entry name" value="E64042"/>
</dbReference>
<dbReference type="RefSeq" id="NP_438184.1">
    <property type="nucleotide sequence ID" value="NC_000907.1"/>
</dbReference>
<dbReference type="SMR" id="P43750"/>
<dbReference type="STRING" id="71421.HI_0011"/>
<dbReference type="EnsemblBacteria" id="AAC21689">
    <property type="protein sequence ID" value="AAC21689"/>
    <property type="gene ID" value="HI_0011"/>
</dbReference>
<dbReference type="KEGG" id="hin:HI_0011"/>
<dbReference type="PATRIC" id="fig|71421.8.peg.11"/>
<dbReference type="eggNOG" id="COG3050">
    <property type="taxonomic scope" value="Bacteria"/>
</dbReference>
<dbReference type="HOGENOM" id="CLU_132082_0_0_6"/>
<dbReference type="OrthoDB" id="5682636at2"/>
<dbReference type="PhylomeDB" id="P43750"/>
<dbReference type="BioCyc" id="HINF71421:G1GJ1-11-MONOMER"/>
<dbReference type="Proteomes" id="UP000000579">
    <property type="component" value="Chromosome"/>
</dbReference>
<dbReference type="GO" id="GO:0008408">
    <property type="term" value="F:3'-5' exonuclease activity"/>
    <property type="evidence" value="ECO:0007669"/>
    <property type="project" value="InterPro"/>
</dbReference>
<dbReference type="GO" id="GO:0003887">
    <property type="term" value="F:DNA-directed DNA polymerase activity"/>
    <property type="evidence" value="ECO:0007669"/>
    <property type="project" value="UniProtKB-KW"/>
</dbReference>
<dbReference type="GO" id="GO:0006260">
    <property type="term" value="P:DNA replication"/>
    <property type="evidence" value="ECO:0007669"/>
    <property type="project" value="UniProtKB-KW"/>
</dbReference>
<dbReference type="Gene3D" id="3.40.50.10220">
    <property type="entry name" value="DNA polymerase III, psi subunit"/>
    <property type="match status" value="1"/>
</dbReference>
<dbReference type="InterPro" id="IPR004615">
    <property type="entry name" value="DNA_pol_III_psi"/>
</dbReference>
<dbReference type="InterPro" id="IPR036654">
    <property type="entry name" value="DNA_pol_III_psi_sf"/>
</dbReference>
<dbReference type="InterPro" id="IPR018382">
    <property type="entry name" value="DNA_pol_III_psi_subgr"/>
</dbReference>
<dbReference type="NCBIfam" id="TIGR00664">
    <property type="entry name" value="DNA_III_psi"/>
    <property type="match status" value="1"/>
</dbReference>
<dbReference type="NCBIfam" id="NF005335">
    <property type="entry name" value="PRK06856.1-1"/>
    <property type="match status" value="1"/>
</dbReference>
<dbReference type="Pfam" id="PF03603">
    <property type="entry name" value="DNA_III_psi"/>
    <property type="match status" value="1"/>
</dbReference>
<dbReference type="PIRSF" id="PIRSF029225">
    <property type="entry name" value="DNA_pol_III_psi"/>
    <property type="match status" value="1"/>
</dbReference>
<dbReference type="SUPFAM" id="SSF102220">
    <property type="entry name" value="DNA polymerase III psi subunit"/>
    <property type="match status" value="1"/>
</dbReference>
<name>HOLD_HAEIN</name>
<feature type="chain" id="PRO_0000105521" description="DNA polymerase III subunit psi">
    <location>
        <begin position="1"/>
        <end position="134"/>
    </location>
</feature>
<proteinExistence type="inferred from homology"/>
<protein>
    <recommendedName>
        <fullName evidence="1">DNA polymerase III subunit psi</fullName>
        <ecNumber>2.7.7.7</ecNumber>
    </recommendedName>
    <alternativeName>
        <fullName evidence="2">Accessory clamp loader complex subunit psi</fullName>
    </alternativeName>
    <alternativeName>
        <fullName evidence="2">Replication clamp loader subunit HolD</fullName>
    </alternativeName>
</protein>